<accession>A8GB71</accession>
<dbReference type="EC" id="3.5.2.9" evidence="1"/>
<dbReference type="EMBL" id="CP000826">
    <property type="protein sequence ID" value="ABV40361.1"/>
    <property type="molecule type" value="Genomic_DNA"/>
</dbReference>
<dbReference type="SMR" id="A8GB71"/>
<dbReference type="STRING" id="399741.Spro_1257"/>
<dbReference type="KEGG" id="spe:Spro_1257"/>
<dbReference type="eggNOG" id="COG1540">
    <property type="taxonomic scope" value="Bacteria"/>
</dbReference>
<dbReference type="HOGENOM" id="CLU_069535_0_0_6"/>
<dbReference type="OrthoDB" id="9773478at2"/>
<dbReference type="GO" id="GO:0017168">
    <property type="term" value="F:5-oxoprolinase (ATP-hydrolyzing) activity"/>
    <property type="evidence" value="ECO:0007669"/>
    <property type="project" value="UniProtKB-UniRule"/>
</dbReference>
<dbReference type="GO" id="GO:0005524">
    <property type="term" value="F:ATP binding"/>
    <property type="evidence" value="ECO:0007669"/>
    <property type="project" value="UniProtKB-UniRule"/>
</dbReference>
<dbReference type="GO" id="GO:0005975">
    <property type="term" value="P:carbohydrate metabolic process"/>
    <property type="evidence" value="ECO:0007669"/>
    <property type="project" value="InterPro"/>
</dbReference>
<dbReference type="CDD" id="cd10800">
    <property type="entry name" value="LamB_YcsF_YbgL_like"/>
    <property type="match status" value="1"/>
</dbReference>
<dbReference type="Gene3D" id="3.20.20.370">
    <property type="entry name" value="Glycoside hydrolase/deacetylase"/>
    <property type="match status" value="1"/>
</dbReference>
<dbReference type="HAMAP" id="MF_00691">
    <property type="entry name" value="PxpA"/>
    <property type="match status" value="1"/>
</dbReference>
<dbReference type="InterPro" id="IPR011330">
    <property type="entry name" value="Glyco_hydro/deAcase_b/a-brl"/>
</dbReference>
<dbReference type="InterPro" id="IPR005501">
    <property type="entry name" value="LamB/YcsF/PxpA-like"/>
</dbReference>
<dbReference type="NCBIfam" id="NF003812">
    <property type="entry name" value="PRK05406.1-1"/>
    <property type="match status" value="1"/>
</dbReference>
<dbReference type="NCBIfam" id="NF003814">
    <property type="entry name" value="PRK05406.1-3"/>
    <property type="match status" value="1"/>
</dbReference>
<dbReference type="NCBIfam" id="NF003815">
    <property type="entry name" value="PRK05406.1-4"/>
    <property type="match status" value="1"/>
</dbReference>
<dbReference type="NCBIfam" id="NF003816">
    <property type="entry name" value="PRK05406.1-5"/>
    <property type="match status" value="1"/>
</dbReference>
<dbReference type="PANTHER" id="PTHR30292:SF0">
    <property type="entry name" value="5-OXOPROLINASE SUBUNIT A"/>
    <property type="match status" value="1"/>
</dbReference>
<dbReference type="PANTHER" id="PTHR30292">
    <property type="entry name" value="UNCHARACTERIZED PROTEIN YBGL-RELATED"/>
    <property type="match status" value="1"/>
</dbReference>
<dbReference type="Pfam" id="PF03746">
    <property type="entry name" value="LamB_YcsF"/>
    <property type="match status" value="1"/>
</dbReference>
<dbReference type="SUPFAM" id="SSF88713">
    <property type="entry name" value="Glycoside hydrolase/deacetylase"/>
    <property type="match status" value="1"/>
</dbReference>
<proteinExistence type="inferred from homology"/>
<keyword id="KW-0067">ATP-binding</keyword>
<keyword id="KW-0378">Hydrolase</keyword>
<keyword id="KW-0547">Nucleotide-binding</keyword>
<comment type="function">
    <text evidence="1">Catalyzes the cleavage of 5-oxoproline to form L-glutamate coupled to the hydrolysis of ATP to ADP and inorganic phosphate.</text>
</comment>
<comment type="catalytic activity">
    <reaction evidence="1">
        <text>5-oxo-L-proline + ATP + 2 H2O = L-glutamate + ADP + phosphate + H(+)</text>
        <dbReference type="Rhea" id="RHEA:10348"/>
        <dbReference type="ChEBI" id="CHEBI:15377"/>
        <dbReference type="ChEBI" id="CHEBI:15378"/>
        <dbReference type="ChEBI" id="CHEBI:29985"/>
        <dbReference type="ChEBI" id="CHEBI:30616"/>
        <dbReference type="ChEBI" id="CHEBI:43474"/>
        <dbReference type="ChEBI" id="CHEBI:58402"/>
        <dbReference type="ChEBI" id="CHEBI:456216"/>
        <dbReference type="EC" id="3.5.2.9"/>
    </reaction>
</comment>
<comment type="subunit">
    <text evidence="1">Forms a complex composed of PxpA, PxpB and PxpC.</text>
</comment>
<comment type="similarity">
    <text evidence="1">Belongs to the LamB/PxpA family.</text>
</comment>
<organism>
    <name type="scientific">Serratia proteamaculans (strain 568)</name>
    <dbReference type="NCBI Taxonomy" id="399741"/>
    <lineage>
        <taxon>Bacteria</taxon>
        <taxon>Pseudomonadati</taxon>
        <taxon>Pseudomonadota</taxon>
        <taxon>Gammaproteobacteria</taxon>
        <taxon>Enterobacterales</taxon>
        <taxon>Yersiniaceae</taxon>
        <taxon>Serratia</taxon>
    </lineage>
</organism>
<evidence type="ECO:0000255" key="1">
    <source>
        <dbReference type="HAMAP-Rule" id="MF_00691"/>
    </source>
</evidence>
<protein>
    <recommendedName>
        <fullName evidence="1">5-oxoprolinase subunit A</fullName>
        <shortName evidence="1">5-OPase subunit A</shortName>
        <ecNumber evidence="1">3.5.2.9</ecNumber>
    </recommendedName>
    <alternativeName>
        <fullName evidence="1">5-oxoprolinase (ATP-hydrolyzing) subunit A</fullName>
    </alternativeName>
</protein>
<gene>
    <name evidence="1" type="primary">pxpA</name>
    <name type="ordered locus">Spro_1257</name>
</gene>
<feature type="chain" id="PRO_1000062024" description="5-oxoprolinase subunit A">
    <location>
        <begin position="1"/>
        <end position="245"/>
    </location>
</feature>
<name>PXPA_SERP5</name>
<sequence length="245" mass="26263">MIVDLNADLGEGCANDQALLQLVSSANIACGFHAGDAQTMRQSVRWALQYGVAIGAHPSFPDRENFGRTRMQLPAETVYAQVVYQLGALAAIARAEGGVMVHVKPHGMLYNQAAVEPELAQAIARAVKAVDPTLRLVGLAGSELIRAGEEQGLVTRQEVFADRGYQADGTLVPRGQPGALITSDELALAQTLEMVRHHRVRTLSGTWAAVQAETVCLHGDGEHALEYARTLRERFAVEGISVSAQ</sequence>
<reference key="1">
    <citation type="submission" date="2007-09" db="EMBL/GenBank/DDBJ databases">
        <title>Complete sequence of chromosome of Serratia proteamaculans 568.</title>
        <authorList>
            <consortium name="US DOE Joint Genome Institute"/>
            <person name="Copeland A."/>
            <person name="Lucas S."/>
            <person name="Lapidus A."/>
            <person name="Barry K."/>
            <person name="Glavina del Rio T."/>
            <person name="Dalin E."/>
            <person name="Tice H."/>
            <person name="Pitluck S."/>
            <person name="Chain P."/>
            <person name="Malfatti S."/>
            <person name="Shin M."/>
            <person name="Vergez L."/>
            <person name="Schmutz J."/>
            <person name="Larimer F."/>
            <person name="Land M."/>
            <person name="Hauser L."/>
            <person name="Kyrpides N."/>
            <person name="Kim E."/>
            <person name="Taghavi S."/>
            <person name="Newman L."/>
            <person name="Vangronsveld J."/>
            <person name="van der Lelie D."/>
            <person name="Richardson P."/>
        </authorList>
    </citation>
    <scope>NUCLEOTIDE SEQUENCE [LARGE SCALE GENOMIC DNA]</scope>
    <source>
        <strain>568</strain>
    </source>
</reference>